<feature type="chain" id="PRO_0000457439" description="Aquaporin-2">
    <location>
        <begin position="1"/>
        <end position="317"/>
    </location>
</feature>
<feature type="topological domain" description="Cytoplasmic" evidence="6">
    <location>
        <begin position="1"/>
        <end position="75"/>
    </location>
</feature>
<feature type="transmembrane region" description="Helical" evidence="2">
    <location>
        <begin position="76"/>
        <end position="96"/>
    </location>
</feature>
<feature type="topological domain" description="Extracellular" evidence="6">
    <location>
        <begin position="97"/>
        <end position="108"/>
    </location>
</feature>
<feature type="transmembrane region" description="Helical" evidence="2">
    <location>
        <begin position="109"/>
        <end position="129"/>
    </location>
</feature>
<feature type="topological domain" description="Cytoplasmic" evidence="6">
    <location>
        <begin position="130"/>
        <end position="154"/>
    </location>
</feature>
<feature type="transmembrane region" description="Helical" evidence="2">
    <location>
        <begin position="155"/>
        <end position="175"/>
    </location>
</feature>
<feature type="topological domain" description="Extracellular" evidence="6">
    <location>
        <begin position="176"/>
        <end position="208"/>
    </location>
</feature>
<feature type="transmembrane region" description="Helical" evidence="2">
    <location>
        <begin position="209"/>
        <end position="229"/>
    </location>
</feature>
<feature type="topological domain" description="Cytoplasmic" evidence="6">
    <location>
        <begin position="230"/>
        <end position="242"/>
    </location>
</feature>
<feature type="transmembrane region" description="Helical" evidence="2">
    <location>
        <begin position="243"/>
        <end position="263"/>
    </location>
</feature>
<feature type="topological domain" description="Extracellular" evidence="6">
    <location>
        <begin position="264"/>
        <end position="295"/>
    </location>
</feature>
<feature type="transmembrane region" description="Helical" evidence="2">
    <location>
        <begin position="296"/>
        <end position="316"/>
    </location>
</feature>
<feature type="topological domain" description="Cytoplasmic" evidence="6">
    <location>
        <position position="317"/>
    </location>
</feature>
<feature type="short sequence motif" description="NPA 1" evidence="6">
    <location>
        <begin position="135"/>
        <end position="137"/>
    </location>
</feature>
<feature type="short sequence motif" description="NPA 2" evidence="6">
    <location>
        <begin position="266"/>
        <end position="268"/>
    </location>
</feature>
<dbReference type="EMBL" id="CH476749">
    <property type="protein sequence ID" value="EIE91236.1"/>
    <property type="molecule type" value="Genomic_DNA"/>
</dbReference>
<dbReference type="SMR" id="I1CS06"/>
<dbReference type="STRING" id="246409.I1CS06"/>
<dbReference type="VEuPathDB" id="FungiDB:RO3G_15947"/>
<dbReference type="eggNOG" id="KOG0224">
    <property type="taxonomic scope" value="Eukaryota"/>
</dbReference>
<dbReference type="InParanoid" id="I1CS06"/>
<dbReference type="OMA" id="KAWDPEY"/>
<dbReference type="OrthoDB" id="59299at4827"/>
<dbReference type="Proteomes" id="UP000009138">
    <property type="component" value="Unassembled WGS sequence"/>
</dbReference>
<dbReference type="GO" id="GO:0005886">
    <property type="term" value="C:plasma membrane"/>
    <property type="evidence" value="ECO:0007669"/>
    <property type="project" value="UniProtKB-SubCell"/>
</dbReference>
<dbReference type="GO" id="GO:0015254">
    <property type="term" value="F:glycerol channel activity"/>
    <property type="evidence" value="ECO:0007669"/>
    <property type="project" value="TreeGrafter"/>
</dbReference>
<dbReference type="GO" id="GO:0015250">
    <property type="term" value="F:water channel activity"/>
    <property type="evidence" value="ECO:0007669"/>
    <property type="project" value="TreeGrafter"/>
</dbReference>
<dbReference type="CDD" id="cd00333">
    <property type="entry name" value="MIP"/>
    <property type="match status" value="1"/>
</dbReference>
<dbReference type="Gene3D" id="1.20.1080.10">
    <property type="entry name" value="Glycerol uptake facilitator protein"/>
    <property type="match status" value="1"/>
</dbReference>
<dbReference type="InterPro" id="IPR023271">
    <property type="entry name" value="Aquaporin-like"/>
</dbReference>
<dbReference type="InterPro" id="IPR000425">
    <property type="entry name" value="MIP"/>
</dbReference>
<dbReference type="InterPro" id="IPR050363">
    <property type="entry name" value="MIP/Aquaporin"/>
</dbReference>
<dbReference type="InterPro" id="IPR022357">
    <property type="entry name" value="MIP_CS"/>
</dbReference>
<dbReference type="NCBIfam" id="TIGR00861">
    <property type="entry name" value="MIP"/>
    <property type="match status" value="1"/>
</dbReference>
<dbReference type="PANTHER" id="PTHR43829">
    <property type="entry name" value="AQUAPORIN OR AQUAGLYCEROPORIN RELATED"/>
    <property type="match status" value="1"/>
</dbReference>
<dbReference type="PANTHER" id="PTHR43829:SF9">
    <property type="entry name" value="AQUAPORIN-9"/>
    <property type="match status" value="1"/>
</dbReference>
<dbReference type="Pfam" id="PF00230">
    <property type="entry name" value="MIP"/>
    <property type="match status" value="1"/>
</dbReference>
<dbReference type="PRINTS" id="PR00783">
    <property type="entry name" value="MINTRINSICP"/>
</dbReference>
<dbReference type="SUPFAM" id="SSF81338">
    <property type="entry name" value="Aquaporin-like"/>
    <property type="match status" value="1"/>
</dbReference>
<dbReference type="PROSITE" id="PS00221">
    <property type="entry name" value="MIP"/>
    <property type="match status" value="1"/>
</dbReference>
<name>AQP2_RHIO9</name>
<protein>
    <recommendedName>
        <fullName evidence="4">Aquaporin-2</fullName>
    </recommendedName>
</protein>
<reference key="1">
    <citation type="journal article" date="2009" name="PLoS Genet.">
        <title>Genomic analysis of the basal lineage fungus Rhizopus oryzae reveals a whole-genome duplication.</title>
        <authorList>
            <person name="Ma L.-J."/>
            <person name="Ibrahim A.S."/>
            <person name="Skory C."/>
            <person name="Grabherr M.G."/>
            <person name="Burger G."/>
            <person name="Butler M."/>
            <person name="Elias M."/>
            <person name="Idnurm A."/>
            <person name="Lang B.F."/>
            <person name="Sone T."/>
            <person name="Abe A."/>
            <person name="Calvo S.E."/>
            <person name="Corrochano L.M."/>
            <person name="Engels R."/>
            <person name="Fu J."/>
            <person name="Hansberg W."/>
            <person name="Kim J.-M."/>
            <person name="Kodira C.D."/>
            <person name="Koehrsen M.J."/>
            <person name="Liu B."/>
            <person name="Miranda-Saavedra D."/>
            <person name="O'Leary S."/>
            <person name="Ortiz-Castellanos L."/>
            <person name="Poulter R."/>
            <person name="Rodriguez-Romero J."/>
            <person name="Ruiz-Herrera J."/>
            <person name="Shen Y.-Q."/>
            <person name="Zeng Q."/>
            <person name="Galagan J."/>
            <person name="Birren B.W."/>
            <person name="Cuomo C.A."/>
            <person name="Wickes B.L."/>
        </authorList>
    </citation>
    <scope>NUCLEOTIDE SEQUENCE [LARGE SCALE GENOMIC DNA]</scope>
    <source>
        <strain>RA 99-880 / ATCC MYA-4621 / FGSC 9543 / NRRL 43880</strain>
    </source>
</reference>
<reference key="2">
    <citation type="journal article" date="2016" name="PLoS ONE">
        <title>The Role of Aquaporins in pH-Dependent Germination of Rhizopus delemar Spores.</title>
        <authorList>
            <person name="Turgeman T."/>
            <person name="Shatil-Cohen A."/>
            <person name="Moshelion M."/>
            <person name="Teper-Bamnolker P."/>
            <person name="Skory C.D."/>
            <person name="Lichter A."/>
            <person name="Eshel D."/>
        </authorList>
    </citation>
    <scope>FUNCTION</scope>
    <scope>DOMAIN</scope>
    <scope>INDUCTION</scope>
    <scope>SUBCELLULAR LOCATION</scope>
    <scope>TOPOLOGY</scope>
    <scope>TRANSPORTER ACTIVITY</scope>
</reference>
<gene>
    <name evidence="4" type="primary">AQP2</name>
    <name type="ORF">RO3G_15947</name>
</gene>
<organism>
    <name type="scientific">Rhizopus delemar (strain RA 99-880 / ATCC MYA-4621 / FGSC 9543 / NRRL 43880)</name>
    <name type="common">Mucormycosis agent</name>
    <name type="synonym">Rhizopus arrhizus var. delemar</name>
    <dbReference type="NCBI Taxonomy" id="246409"/>
    <lineage>
        <taxon>Eukaryota</taxon>
        <taxon>Fungi</taxon>
        <taxon>Fungi incertae sedis</taxon>
        <taxon>Mucoromycota</taxon>
        <taxon>Mucoromycotina</taxon>
        <taxon>Mucoromycetes</taxon>
        <taxon>Mucorales</taxon>
        <taxon>Mucorineae</taxon>
        <taxon>Rhizopodaceae</taxon>
        <taxon>Rhizopus</taxon>
    </lineage>
</organism>
<proteinExistence type="evidence at protein level"/>
<accession>I1CS06</accession>
<evidence type="ECO:0000250" key="1">
    <source>
        <dbReference type="UniProtKB" id="P41181"/>
    </source>
</evidence>
<evidence type="ECO:0000255" key="2"/>
<evidence type="ECO:0000269" key="3">
    <source>
    </source>
</evidence>
<evidence type="ECO:0000303" key="4">
    <source>
    </source>
</evidence>
<evidence type="ECO:0000305" key="5"/>
<evidence type="ECO:0000305" key="6">
    <source>
    </source>
</evidence>
<keyword id="KW-1003">Cell membrane</keyword>
<keyword id="KW-0472">Membrane</keyword>
<keyword id="KW-1185">Reference proteome</keyword>
<keyword id="KW-0677">Repeat</keyword>
<keyword id="KW-0812">Transmembrane</keyword>
<keyword id="KW-1133">Transmembrane helix</keyword>
<keyword id="KW-0813">Transport</keyword>
<comment type="function">
    <text evidence="3">Water channel required to facilitate the transport of water across membranes (PubMed:26959825). Contributes to water uptake of spores during the early stages of spore germination (PubMed:26959825). Aquaporins AQP1 and AQP2 act as extracellular pH sensors and enable the spores to hydrate under favorable conditions and to commence germination (PubMed:26959825). Wounded vegetables and fruit present acidic pH, so the optimal pH range for germination is adapted to the relevant host pH (PubMed:26959825).</text>
</comment>
<comment type="catalytic activity">
    <reaction evidence="3">
        <text>H2O(in) = H2O(out)</text>
        <dbReference type="Rhea" id="RHEA:29667"/>
        <dbReference type="ChEBI" id="CHEBI:15377"/>
    </reaction>
</comment>
<comment type="catalytic activity">
    <reaction evidence="1">
        <text>glycerol(in) = glycerol(out)</text>
        <dbReference type="Rhea" id="RHEA:29675"/>
        <dbReference type="ChEBI" id="CHEBI:17754"/>
    </reaction>
</comment>
<comment type="subcellular location">
    <subcellularLocation>
        <location evidence="3">Cell membrane</location>
        <topology evidence="2">Multi-pass membrane protein</topology>
    </subcellularLocation>
</comment>
<comment type="induction">
    <text evidence="3">Expression is relatively low at the spore resting stage and increases steadily from the induction of germination to a peak after 180 minutes, at the onset of the polar growth stage.</text>
</comment>
<comment type="domain">
    <text evidence="6">Aquaporins contain two tandem repeats each containing three membrane-spanning domains and a pore-forming loop with the signature motif Asn-Pro-Ala (NPA).</text>
</comment>
<comment type="similarity">
    <text evidence="5">Belongs to the MIP/aquaporin (TC 1.A.8) family.</text>
</comment>
<sequence length="317" mass="34360">MSLRDDLTINERDPLLSSFDQRQEYNTSNNTYKVNNNSNEPSVLTLYNSDELGTSQRSSYQKFVRRSQEFKMQHREFLAEFIGTLILVLLTCGFCAEQTLNIEKSKSWLTSSLGSGLSVLIGICVAGHVSGGHLNPAITIAFWVFSGFPIRKVPMYITAQLLGAFSGAALLYSIVEPAISQFDHGKRQILGELGTAGIFGTYPPLYVGTGSAVASEVVGTAMLLLVVMVTGHPNNLPFRTAQGAMIALGVTTISLCIGYTSGFSLNPARDFGPRLFTAVAGWGIDVFTVHHYYALVPMFAPILGGLAGGFIYTVFID</sequence>